<gene>
    <name type="ORF">H2R</name>
    <name type="ORF">I2R</name>
</gene>
<dbReference type="EMBL" id="L22579">
    <property type="protein sequence ID" value="AAA60833.1"/>
    <property type="molecule type" value="Genomic_DNA"/>
</dbReference>
<dbReference type="EMBL" id="X76264">
    <property type="protein sequence ID" value="CAA53839.1"/>
    <property type="molecule type" value="Genomic_DNA"/>
</dbReference>
<dbReference type="PIR" id="C72161">
    <property type="entry name" value="C72161"/>
</dbReference>
<dbReference type="PIR" id="T28523">
    <property type="entry name" value="T28523"/>
</dbReference>
<dbReference type="RefSeq" id="NP_042129.1">
    <property type="nucleotide sequence ID" value="NC_001611.1"/>
</dbReference>
<dbReference type="SMR" id="P0DSZ0"/>
<dbReference type="GeneID" id="1486440"/>
<dbReference type="KEGG" id="vg:1486440"/>
<dbReference type="Proteomes" id="UP000119805">
    <property type="component" value="Segment"/>
</dbReference>
<dbReference type="GO" id="GO:0016020">
    <property type="term" value="C:membrane"/>
    <property type="evidence" value="ECO:0007669"/>
    <property type="project" value="UniProtKB-KW"/>
</dbReference>
<dbReference type="GO" id="GO:0019031">
    <property type="term" value="C:viral envelope"/>
    <property type="evidence" value="ECO:0007669"/>
    <property type="project" value="UniProtKB-KW"/>
</dbReference>
<dbReference type="GO" id="GO:0055036">
    <property type="term" value="C:virion membrane"/>
    <property type="evidence" value="ECO:0007669"/>
    <property type="project" value="UniProtKB-SubCell"/>
</dbReference>
<dbReference type="GO" id="GO:0019064">
    <property type="term" value="P:fusion of virus membrane with host plasma membrane"/>
    <property type="evidence" value="ECO:0007669"/>
    <property type="project" value="UniProtKB-KW"/>
</dbReference>
<dbReference type="GO" id="GO:0046718">
    <property type="term" value="P:symbiont entry into host cell"/>
    <property type="evidence" value="ECO:0007669"/>
    <property type="project" value="UniProtKB-KW"/>
</dbReference>
<dbReference type="InterPro" id="IPR005023">
    <property type="entry name" value="Pox_LP_H2"/>
</dbReference>
<dbReference type="Pfam" id="PF03356">
    <property type="entry name" value="Pox_LP_H2"/>
    <property type="match status" value="1"/>
</dbReference>
<protein>
    <recommendedName>
        <fullName>Late protein H2</fullName>
    </recommendedName>
</protein>
<name>H2_VARV</name>
<keyword id="KW-1015">Disulfide bond</keyword>
<keyword id="KW-1169">Fusion of virus membrane with host cell membrane</keyword>
<keyword id="KW-1168">Fusion of virus membrane with host membrane</keyword>
<keyword id="KW-0426">Late protein</keyword>
<keyword id="KW-0472">Membrane</keyword>
<keyword id="KW-0735">Signal-anchor</keyword>
<keyword id="KW-0812">Transmembrane</keyword>
<keyword id="KW-1133">Transmembrane helix</keyword>
<keyword id="KW-0261">Viral envelope protein</keyword>
<keyword id="KW-1162">Viral penetration into host cytoplasm</keyword>
<keyword id="KW-0946">Virion</keyword>
<keyword id="KW-1160">Virus entry into host cell</keyword>
<organism>
    <name type="scientific">Variola virus</name>
    <dbReference type="NCBI Taxonomy" id="10255"/>
    <lineage>
        <taxon>Viruses</taxon>
        <taxon>Varidnaviria</taxon>
        <taxon>Bamfordvirae</taxon>
        <taxon>Nucleocytoviricota</taxon>
        <taxon>Pokkesviricetes</taxon>
        <taxon>Chitovirales</taxon>
        <taxon>Poxviridae</taxon>
        <taxon>Chordopoxvirinae</taxon>
        <taxon>Orthopoxvirus</taxon>
    </lineage>
</organism>
<sequence>MDKTTLSVNACNLEYVREKAIVGVQAAKTSTLIFFVIILAISALLLWFQTSDNPVFNELTRYMRIKNTVNDWKSLTDSKTKLESDRGRLLAAGKDDIFEFKCVDFGAYFIAMRLDKKTYLPQAIRRGTGDAWMVKKAAKVDPSAQQFCQYLIKHKSNNVITCGNEMLNELGYSGYFMSPHWCSDLSNME</sequence>
<proteinExistence type="inferred from homology"/>
<comment type="function">
    <text evidence="1">Envelope protein part of the entry-fusion complex responsible for the virus membrane fusion with host cell membrane during virus entry. Also plays a role in cell-cell fusion (syncytium formation) (By similarity).</text>
</comment>
<comment type="subunit">
    <text evidence="1">Part of a stable entry-fusion complex (EFC) which is at least composed of proteins A16, A21, A28, G3, G9, H2, J5, and L5. Formation of the viral membrane is necessary for the assembly of the complex (By similarity).</text>
</comment>
<comment type="subcellular location">
    <subcellularLocation>
        <location evidence="3">Virion membrane</location>
        <topology evidence="3">Single-pass type III membrane protein</topology>
    </subcellularLocation>
    <text evidence="1">Component of the mature virion (MV) membrane. The mature virion is located in the cytoplasm of infected cells and is probably released by cell lysis.</text>
</comment>
<comment type="PTM">
    <text evidence="1">Contains two intramolecular disulfide bonds. They are created by the viral disulfide bond formation pathway, a poxvirus-specific pathway that operates on the cytoplasmic side of the MV membranes (By similarity).</text>
</comment>
<comment type="similarity">
    <text evidence="3">Belongs to the poxviridae H2 family.</text>
</comment>
<accession>P0DSZ0</accession>
<accession>P33061</accession>
<reference key="1">
    <citation type="journal article" date="1993" name="Nature">
        <title>Potential virulence determinants in terminal regions of variola smallpox virus genome.</title>
        <authorList>
            <person name="Massung R.F."/>
            <person name="Esposito J.J."/>
            <person name="Liu L.I."/>
            <person name="Qi J."/>
            <person name="Utterback T.R."/>
            <person name="Knight J.C."/>
            <person name="Aubin L."/>
            <person name="Yuran T.E."/>
            <person name="Parsons J.M."/>
            <person name="Loparev V.N."/>
            <person name="Selivanov N.A."/>
            <person name="Cavallaro K.F."/>
            <person name="Kerlavage A.R."/>
            <person name="Mahy B.W.J."/>
            <person name="Venter J.C."/>
        </authorList>
    </citation>
    <scope>NUCLEOTIDE SEQUENCE [GENOMIC DNA]</scope>
    <source>
        <strain>Bangladesh-1975</strain>
    </source>
</reference>
<reference key="2">
    <citation type="submission" date="1995-12" db="EMBL/GenBank/DDBJ databases">
        <authorList>
            <person name="Shchelkunov S.N."/>
            <person name="Balkin I.V."/>
            <person name="Totmenin A.V."/>
            <person name="Resenchuk S.M."/>
            <person name="Blinov V.M."/>
            <person name="Sandakhchiev L.S."/>
        </authorList>
    </citation>
    <scope>NUCLEOTIDE SEQUENCE [GENOMIC DNA]</scope>
    <source>
        <strain>Garcia-1966</strain>
    </source>
</reference>
<organismHost>
    <name type="scientific">Homo sapiens</name>
    <name type="common">Human</name>
    <dbReference type="NCBI Taxonomy" id="9606"/>
</organismHost>
<feature type="chain" id="PRO_0000448197" description="Late protein H2">
    <location>
        <begin position="1"/>
        <end position="189"/>
    </location>
</feature>
<feature type="topological domain" description="Intravirion" evidence="2">
    <location>
        <begin position="1"/>
        <end position="28"/>
    </location>
</feature>
<feature type="transmembrane region" description="Helical; Signal-anchor for type III membrane protein" evidence="2">
    <location>
        <begin position="29"/>
        <end position="49"/>
    </location>
</feature>
<feature type="topological domain" description="Virion surface" evidence="2">
    <location>
        <begin position="50"/>
        <end position="189"/>
    </location>
</feature>
<evidence type="ECO:0000250" key="1"/>
<evidence type="ECO:0000255" key="2"/>
<evidence type="ECO:0000305" key="3"/>